<reference key="1">
    <citation type="journal article" date="2001" name="Nature">
        <title>Genome sequence of Yersinia pestis, the causative agent of plague.</title>
        <authorList>
            <person name="Parkhill J."/>
            <person name="Wren B.W."/>
            <person name="Thomson N.R."/>
            <person name="Titball R.W."/>
            <person name="Holden M.T.G."/>
            <person name="Prentice M.B."/>
            <person name="Sebaihia M."/>
            <person name="James K.D."/>
            <person name="Churcher C.M."/>
            <person name="Mungall K.L."/>
            <person name="Baker S."/>
            <person name="Basham D."/>
            <person name="Bentley S.D."/>
            <person name="Brooks K."/>
            <person name="Cerdeno-Tarraga A.-M."/>
            <person name="Chillingworth T."/>
            <person name="Cronin A."/>
            <person name="Davies R.M."/>
            <person name="Davis P."/>
            <person name="Dougan G."/>
            <person name="Feltwell T."/>
            <person name="Hamlin N."/>
            <person name="Holroyd S."/>
            <person name="Jagels K."/>
            <person name="Karlyshev A.V."/>
            <person name="Leather S."/>
            <person name="Moule S."/>
            <person name="Oyston P.C.F."/>
            <person name="Quail M.A."/>
            <person name="Rutherford K.M."/>
            <person name="Simmonds M."/>
            <person name="Skelton J."/>
            <person name="Stevens K."/>
            <person name="Whitehead S."/>
            <person name="Barrell B.G."/>
        </authorList>
    </citation>
    <scope>NUCLEOTIDE SEQUENCE [LARGE SCALE GENOMIC DNA]</scope>
    <source>
        <strain>CO-92 / Biovar Orientalis</strain>
    </source>
</reference>
<reference key="2">
    <citation type="journal article" date="2002" name="J. Bacteriol.">
        <title>Genome sequence of Yersinia pestis KIM.</title>
        <authorList>
            <person name="Deng W."/>
            <person name="Burland V."/>
            <person name="Plunkett G. III"/>
            <person name="Boutin A."/>
            <person name="Mayhew G.F."/>
            <person name="Liss P."/>
            <person name="Perna N.T."/>
            <person name="Rose D.J."/>
            <person name="Mau B."/>
            <person name="Zhou S."/>
            <person name="Schwartz D.C."/>
            <person name="Fetherston J.D."/>
            <person name="Lindler L.E."/>
            <person name="Brubaker R.R."/>
            <person name="Plano G.V."/>
            <person name="Straley S.C."/>
            <person name="McDonough K.A."/>
            <person name="Nilles M.L."/>
            <person name="Matson J.S."/>
            <person name="Blattner F.R."/>
            <person name="Perry R.D."/>
        </authorList>
    </citation>
    <scope>NUCLEOTIDE SEQUENCE [LARGE SCALE GENOMIC DNA]</scope>
    <source>
        <strain>KIM10+ / Biovar Mediaevalis</strain>
    </source>
</reference>
<reference key="3">
    <citation type="journal article" date="2004" name="DNA Res.">
        <title>Complete genome sequence of Yersinia pestis strain 91001, an isolate avirulent to humans.</title>
        <authorList>
            <person name="Song Y."/>
            <person name="Tong Z."/>
            <person name="Wang J."/>
            <person name="Wang L."/>
            <person name="Guo Z."/>
            <person name="Han Y."/>
            <person name="Zhang J."/>
            <person name="Pei D."/>
            <person name="Zhou D."/>
            <person name="Qin H."/>
            <person name="Pang X."/>
            <person name="Han Y."/>
            <person name="Zhai J."/>
            <person name="Li M."/>
            <person name="Cui B."/>
            <person name="Qi Z."/>
            <person name="Jin L."/>
            <person name="Dai R."/>
            <person name="Chen F."/>
            <person name="Li S."/>
            <person name="Ye C."/>
            <person name="Du Z."/>
            <person name="Lin W."/>
            <person name="Wang J."/>
            <person name="Yu J."/>
            <person name="Yang H."/>
            <person name="Wang J."/>
            <person name="Huang P."/>
            <person name="Yang R."/>
        </authorList>
    </citation>
    <scope>NUCLEOTIDE SEQUENCE [LARGE SCALE GENOMIC DNA]</scope>
    <source>
        <strain>91001 / Biovar Mediaevalis</strain>
    </source>
</reference>
<name>DUSB_YERPE</name>
<keyword id="KW-0285">Flavoprotein</keyword>
<keyword id="KW-0288">FMN</keyword>
<keyword id="KW-0521">NADP</keyword>
<keyword id="KW-0560">Oxidoreductase</keyword>
<keyword id="KW-1185">Reference proteome</keyword>
<keyword id="KW-0694">RNA-binding</keyword>
<keyword id="KW-0819">tRNA processing</keyword>
<keyword id="KW-0820">tRNA-binding</keyword>
<gene>
    <name evidence="1" type="primary">dusB</name>
    <name type="ordered locus">YPO3655</name>
    <name type="ordered locus">y0213</name>
    <name type="ordered locus">YP_3892</name>
</gene>
<evidence type="ECO:0000255" key="1">
    <source>
        <dbReference type="HAMAP-Rule" id="MF_02042"/>
    </source>
</evidence>
<evidence type="ECO:0000305" key="2"/>
<sequence length="321" mass="35467">MRIGHFQLTNCLIAAPMAGITDRPFRALCHGMGAGMAVSEMLSSNPEVWRTDKSRLRMVHVDEPGIRNVQIAGNDPDEMAAAARINVASGAQIIDINMGCPAKKVNRKLAGSALLQHPDLVKQILSAVVNAVDVPVTLKIRTGWSPEHRNCIEIAQLAENCGIQALTIHGRTRSCLFNGEAEYDSIRAVKQTVSIPVIANGDITDPHKARAVLDYTGADALMIGRAAQGRPWIFREIQHYLDTGELLPPMPLGEVQRLLDGHIRELHDFYGPGKGFRIARKHVSWYLQEHAPNDQFRRTFNAIEDASEQLEALEAYFENLA</sequence>
<comment type="function">
    <text evidence="1">Catalyzes the synthesis of 5,6-dihydrouridine (D), a modified base found in the D-loop of most tRNAs, via the reduction of the C5-C6 double bond in target uridines.</text>
</comment>
<comment type="catalytic activity">
    <reaction evidence="1">
        <text>a 5,6-dihydrouridine in tRNA + NAD(+) = a uridine in tRNA + NADH + H(+)</text>
        <dbReference type="Rhea" id="RHEA:54452"/>
        <dbReference type="Rhea" id="RHEA-COMP:13339"/>
        <dbReference type="Rhea" id="RHEA-COMP:13887"/>
        <dbReference type="ChEBI" id="CHEBI:15378"/>
        <dbReference type="ChEBI" id="CHEBI:57540"/>
        <dbReference type="ChEBI" id="CHEBI:57945"/>
        <dbReference type="ChEBI" id="CHEBI:65315"/>
        <dbReference type="ChEBI" id="CHEBI:74443"/>
    </reaction>
</comment>
<comment type="catalytic activity">
    <reaction evidence="1">
        <text>a 5,6-dihydrouridine in tRNA + NADP(+) = a uridine in tRNA + NADPH + H(+)</text>
        <dbReference type="Rhea" id="RHEA:23624"/>
        <dbReference type="Rhea" id="RHEA-COMP:13339"/>
        <dbReference type="Rhea" id="RHEA-COMP:13887"/>
        <dbReference type="ChEBI" id="CHEBI:15378"/>
        <dbReference type="ChEBI" id="CHEBI:57783"/>
        <dbReference type="ChEBI" id="CHEBI:58349"/>
        <dbReference type="ChEBI" id="CHEBI:65315"/>
        <dbReference type="ChEBI" id="CHEBI:74443"/>
    </reaction>
</comment>
<comment type="cofactor">
    <cofactor evidence="1">
        <name>FMN</name>
        <dbReference type="ChEBI" id="CHEBI:58210"/>
    </cofactor>
</comment>
<comment type="similarity">
    <text evidence="1">Belongs to the Dus family. DusB subfamily.</text>
</comment>
<comment type="sequence caution" evidence="2">
    <conflict type="erroneous initiation">
        <sequence resource="EMBL-CDS" id="AAM83807"/>
    </conflict>
</comment>
<comment type="sequence caution" evidence="2">
    <conflict type="erroneous initiation">
        <sequence resource="EMBL-CDS" id="AAS64037"/>
    </conflict>
</comment>
<proteinExistence type="inferred from homology"/>
<dbReference type="EC" id="1.3.1.-" evidence="1"/>
<dbReference type="EMBL" id="AL590842">
    <property type="protein sequence ID" value="CAL22243.1"/>
    <property type="molecule type" value="Genomic_DNA"/>
</dbReference>
<dbReference type="EMBL" id="AE009952">
    <property type="protein sequence ID" value="AAM83807.1"/>
    <property type="status" value="ALT_INIT"/>
    <property type="molecule type" value="Genomic_DNA"/>
</dbReference>
<dbReference type="EMBL" id="AE017042">
    <property type="protein sequence ID" value="AAS64037.1"/>
    <property type="status" value="ALT_INIT"/>
    <property type="molecule type" value="Genomic_DNA"/>
</dbReference>
<dbReference type="PIR" id="AH0444">
    <property type="entry name" value="AH0444"/>
</dbReference>
<dbReference type="RefSeq" id="WP_002210062.1">
    <property type="nucleotide sequence ID" value="NZ_WUCM01000059.1"/>
</dbReference>
<dbReference type="RefSeq" id="YP_002348540.1">
    <property type="nucleotide sequence ID" value="NC_003143.1"/>
</dbReference>
<dbReference type="SMR" id="Q8ZAX7"/>
<dbReference type="STRING" id="214092.YPO3655"/>
<dbReference type="PaxDb" id="214092-YPO3655"/>
<dbReference type="DNASU" id="1145160"/>
<dbReference type="EnsemblBacteria" id="AAS64037">
    <property type="protein sequence ID" value="AAS64037"/>
    <property type="gene ID" value="YP_3892"/>
</dbReference>
<dbReference type="GeneID" id="57975079"/>
<dbReference type="KEGG" id="ype:YPO3655"/>
<dbReference type="KEGG" id="ypk:y0213"/>
<dbReference type="KEGG" id="ypm:YP_3892"/>
<dbReference type="PATRIC" id="fig|214092.21.peg.4156"/>
<dbReference type="eggNOG" id="COG0042">
    <property type="taxonomic scope" value="Bacteria"/>
</dbReference>
<dbReference type="HOGENOM" id="CLU_013299_0_1_6"/>
<dbReference type="OMA" id="QRPHHDI"/>
<dbReference type="OrthoDB" id="9764501at2"/>
<dbReference type="Proteomes" id="UP000000815">
    <property type="component" value="Chromosome"/>
</dbReference>
<dbReference type="Proteomes" id="UP000001019">
    <property type="component" value="Chromosome"/>
</dbReference>
<dbReference type="Proteomes" id="UP000002490">
    <property type="component" value="Chromosome"/>
</dbReference>
<dbReference type="GO" id="GO:0050660">
    <property type="term" value="F:flavin adenine dinucleotide binding"/>
    <property type="evidence" value="ECO:0007669"/>
    <property type="project" value="InterPro"/>
</dbReference>
<dbReference type="GO" id="GO:0010181">
    <property type="term" value="F:FMN binding"/>
    <property type="evidence" value="ECO:0007669"/>
    <property type="project" value="UniProtKB-UniRule"/>
</dbReference>
<dbReference type="GO" id="GO:0000049">
    <property type="term" value="F:tRNA binding"/>
    <property type="evidence" value="ECO:0007669"/>
    <property type="project" value="UniProtKB-UniRule"/>
</dbReference>
<dbReference type="GO" id="GO:0017150">
    <property type="term" value="F:tRNA dihydrouridine synthase activity"/>
    <property type="evidence" value="ECO:0007669"/>
    <property type="project" value="UniProtKB-UniRule"/>
</dbReference>
<dbReference type="CDD" id="cd02801">
    <property type="entry name" value="DUS_like_FMN"/>
    <property type="match status" value="1"/>
</dbReference>
<dbReference type="FunFam" id="1.10.1200.80:FF:000001">
    <property type="entry name" value="tRNA-dihydrouridine synthase B"/>
    <property type="match status" value="1"/>
</dbReference>
<dbReference type="FunFam" id="3.20.20.70:FF:000051">
    <property type="entry name" value="tRNA-dihydrouridine synthase B"/>
    <property type="match status" value="1"/>
</dbReference>
<dbReference type="Gene3D" id="3.20.20.70">
    <property type="entry name" value="Aldolase class I"/>
    <property type="match status" value="1"/>
</dbReference>
<dbReference type="Gene3D" id="1.10.1200.80">
    <property type="entry name" value="Putative flavin oxidoreducatase, domain 2"/>
    <property type="match status" value="1"/>
</dbReference>
<dbReference type="HAMAP" id="MF_02042">
    <property type="entry name" value="DusB_subfam"/>
    <property type="match status" value="1"/>
</dbReference>
<dbReference type="InterPro" id="IPR013785">
    <property type="entry name" value="Aldolase_TIM"/>
</dbReference>
<dbReference type="InterPro" id="IPR035587">
    <property type="entry name" value="DUS-like_FMN-bd"/>
</dbReference>
<dbReference type="InterPro" id="IPR001269">
    <property type="entry name" value="DUS_fam"/>
</dbReference>
<dbReference type="InterPro" id="IPR032887">
    <property type="entry name" value="DusB"/>
</dbReference>
<dbReference type="InterPro" id="IPR004652">
    <property type="entry name" value="DusB-like"/>
</dbReference>
<dbReference type="InterPro" id="IPR024036">
    <property type="entry name" value="tRNA-dHydroUridine_Synthase_C"/>
</dbReference>
<dbReference type="InterPro" id="IPR018517">
    <property type="entry name" value="tRNA_hU_synthase_CS"/>
</dbReference>
<dbReference type="NCBIfam" id="TIGR00737">
    <property type="entry name" value="nifR3_yhdG"/>
    <property type="match status" value="1"/>
</dbReference>
<dbReference type="PANTHER" id="PTHR45846">
    <property type="entry name" value="TRNA-DIHYDROURIDINE(47) SYNTHASE [NAD(P)(+)]-LIKE"/>
    <property type="match status" value="1"/>
</dbReference>
<dbReference type="PANTHER" id="PTHR45846:SF1">
    <property type="entry name" value="TRNA-DIHYDROURIDINE(47) SYNTHASE [NAD(P)(+)]-LIKE"/>
    <property type="match status" value="1"/>
</dbReference>
<dbReference type="Pfam" id="PF01207">
    <property type="entry name" value="Dus"/>
    <property type="match status" value="1"/>
</dbReference>
<dbReference type="PIRSF" id="PIRSF006621">
    <property type="entry name" value="Dus"/>
    <property type="match status" value="1"/>
</dbReference>
<dbReference type="SUPFAM" id="SSF51395">
    <property type="entry name" value="FMN-linked oxidoreductases"/>
    <property type="match status" value="1"/>
</dbReference>
<dbReference type="PROSITE" id="PS01136">
    <property type="entry name" value="UPF0034"/>
    <property type="match status" value="1"/>
</dbReference>
<feature type="chain" id="PRO_0000162106" description="tRNA-dihydrouridine synthase B">
    <location>
        <begin position="1"/>
        <end position="321"/>
    </location>
</feature>
<feature type="active site" description="Proton donor" evidence="1">
    <location>
        <position position="100"/>
    </location>
</feature>
<feature type="binding site" evidence="1">
    <location>
        <begin position="16"/>
        <end position="18"/>
    </location>
    <ligand>
        <name>FMN</name>
        <dbReference type="ChEBI" id="CHEBI:58210"/>
    </ligand>
</feature>
<feature type="binding site" evidence="1">
    <location>
        <position position="70"/>
    </location>
    <ligand>
        <name>FMN</name>
        <dbReference type="ChEBI" id="CHEBI:58210"/>
    </ligand>
</feature>
<feature type="binding site" evidence="1">
    <location>
        <position position="139"/>
    </location>
    <ligand>
        <name>FMN</name>
        <dbReference type="ChEBI" id="CHEBI:58210"/>
    </ligand>
</feature>
<feature type="binding site" evidence="1">
    <location>
        <begin position="200"/>
        <end position="202"/>
    </location>
    <ligand>
        <name>FMN</name>
        <dbReference type="ChEBI" id="CHEBI:58210"/>
    </ligand>
</feature>
<feature type="binding site" evidence="1">
    <location>
        <begin position="224"/>
        <end position="225"/>
    </location>
    <ligand>
        <name>FMN</name>
        <dbReference type="ChEBI" id="CHEBI:58210"/>
    </ligand>
</feature>
<organism>
    <name type="scientific">Yersinia pestis</name>
    <dbReference type="NCBI Taxonomy" id="632"/>
    <lineage>
        <taxon>Bacteria</taxon>
        <taxon>Pseudomonadati</taxon>
        <taxon>Pseudomonadota</taxon>
        <taxon>Gammaproteobacteria</taxon>
        <taxon>Enterobacterales</taxon>
        <taxon>Yersiniaceae</taxon>
        <taxon>Yersinia</taxon>
    </lineage>
</organism>
<accession>Q8ZAX7</accession>
<accession>Q0WAZ8</accession>
<accession>Q8D1P0</accession>
<protein>
    <recommendedName>
        <fullName evidence="1">tRNA-dihydrouridine synthase B</fullName>
        <ecNumber evidence="1">1.3.1.-</ecNumber>
    </recommendedName>
</protein>